<gene>
    <name evidence="1" type="primary">mraY</name>
    <name type="ordered locus">BF0309</name>
</gene>
<comment type="function">
    <text evidence="1">Catalyzes the initial step of the lipid cycle reactions in the biosynthesis of the cell wall peptidoglycan: transfers peptidoglycan precursor phospho-MurNAc-pentapeptide from UDP-MurNAc-pentapeptide onto the lipid carrier undecaprenyl phosphate, yielding undecaprenyl-pyrophosphoryl-MurNAc-pentapeptide, known as lipid I.</text>
</comment>
<comment type="catalytic activity">
    <reaction evidence="1">
        <text>UDP-N-acetyl-alpha-D-muramoyl-L-alanyl-gamma-D-glutamyl-meso-2,6-diaminopimeloyl-D-alanyl-D-alanine + di-trans,octa-cis-undecaprenyl phosphate = di-trans,octa-cis-undecaprenyl diphospho-N-acetyl-alpha-D-muramoyl-L-alanyl-D-glutamyl-meso-2,6-diaminopimeloyl-D-alanyl-D-alanine + UMP</text>
        <dbReference type="Rhea" id="RHEA:28386"/>
        <dbReference type="ChEBI" id="CHEBI:57865"/>
        <dbReference type="ChEBI" id="CHEBI:60392"/>
        <dbReference type="ChEBI" id="CHEBI:61386"/>
        <dbReference type="ChEBI" id="CHEBI:61387"/>
        <dbReference type="EC" id="2.7.8.13"/>
    </reaction>
</comment>
<comment type="cofactor">
    <cofactor evidence="1">
        <name>Mg(2+)</name>
        <dbReference type="ChEBI" id="CHEBI:18420"/>
    </cofactor>
</comment>
<comment type="pathway">
    <text evidence="1">Cell wall biogenesis; peptidoglycan biosynthesis.</text>
</comment>
<comment type="subcellular location">
    <subcellularLocation>
        <location evidence="1">Cell inner membrane</location>
        <topology evidence="1">Multi-pass membrane protein</topology>
    </subcellularLocation>
</comment>
<comment type="similarity">
    <text evidence="1">Belongs to the glycosyltransferase 4 family. MraY subfamily.</text>
</comment>
<proteinExistence type="inferred from homology"/>
<dbReference type="EC" id="2.7.8.13" evidence="1"/>
<dbReference type="EMBL" id="AP006841">
    <property type="protein sequence ID" value="BAD47058.1"/>
    <property type="molecule type" value="Genomic_DNA"/>
</dbReference>
<dbReference type="RefSeq" id="WP_005796732.1">
    <property type="nucleotide sequence ID" value="NC_006347.1"/>
</dbReference>
<dbReference type="RefSeq" id="YP_097592.1">
    <property type="nucleotide sequence ID" value="NC_006347.1"/>
</dbReference>
<dbReference type="SMR" id="Q64ZL8"/>
<dbReference type="STRING" id="295405.BF0309"/>
<dbReference type="GeneID" id="60368692"/>
<dbReference type="KEGG" id="bfr:BF0309"/>
<dbReference type="PATRIC" id="fig|295405.11.peg.332"/>
<dbReference type="HOGENOM" id="CLU_023982_0_0_10"/>
<dbReference type="OrthoDB" id="9805475at2"/>
<dbReference type="UniPathway" id="UPA00219"/>
<dbReference type="Proteomes" id="UP000002197">
    <property type="component" value="Chromosome"/>
</dbReference>
<dbReference type="GO" id="GO:0005886">
    <property type="term" value="C:plasma membrane"/>
    <property type="evidence" value="ECO:0007669"/>
    <property type="project" value="UniProtKB-SubCell"/>
</dbReference>
<dbReference type="GO" id="GO:0046872">
    <property type="term" value="F:metal ion binding"/>
    <property type="evidence" value="ECO:0007669"/>
    <property type="project" value="UniProtKB-KW"/>
</dbReference>
<dbReference type="GO" id="GO:0008963">
    <property type="term" value="F:phospho-N-acetylmuramoyl-pentapeptide-transferase activity"/>
    <property type="evidence" value="ECO:0007669"/>
    <property type="project" value="UniProtKB-UniRule"/>
</dbReference>
<dbReference type="GO" id="GO:0051992">
    <property type="term" value="F:UDP-N-acetylmuramoyl-L-alanyl-D-glutamyl-meso-2,6-diaminopimelyl-D-alanyl-D-alanine:undecaprenyl-phosphate transferase activity"/>
    <property type="evidence" value="ECO:0007669"/>
    <property type="project" value="RHEA"/>
</dbReference>
<dbReference type="GO" id="GO:0051301">
    <property type="term" value="P:cell division"/>
    <property type="evidence" value="ECO:0007669"/>
    <property type="project" value="UniProtKB-KW"/>
</dbReference>
<dbReference type="GO" id="GO:0071555">
    <property type="term" value="P:cell wall organization"/>
    <property type="evidence" value="ECO:0007669"/>
    <property type="project" value="UniProtKB-KW"/>
</dbReference>
<dbReference type="GO" id="GO:0009252">
    <property type="term" value="P:peptidoglycan biosynthetic process"/>
    <property type="evidence" value="ECO:0007669"/>
    <property type="project" value="UniProtKB-UniRule"/>
</dbReference>
<dbReference type="GO" id="GO:0008360">
    <property type="term" value="P:regulation of cell shape"/>
    <property type="evidence" value="ECO:0007669"/>
    <property type="project" value="UniProtKB-KW"/>
</dbReference>
<dbReference type="CDD" id="cd06852">
    <property type="entry name" value="GT_MraY"/>
    <property type="match status" value="1"/>
</dbReference>
<dbReference type="HAMAP" id="MF_00038">
    <property type="entry name" value="MraY"/>
    <property type="match status" value="1"/>
</dbReference>
<dbReference type="InterPro" id="IPR000715">
    <property type="entry name" value="Glycosyl_transferase_4"/>
</dbReference>
<dbReference type="InterPro" id="IPR003524">
    <property type="entry name" value="PNAcMuramoyl-5peptid_Trfase"/>
</dbReference>
<dbReference type="InterPro" id="IPR018480">
    <property type="entry name" value="PNAcMuramoyl-5peptid_Trfase_CS"/>
</dbReference>
<dbReference type="NCBIfam" id="TIGR00445">
    <property type="entry name" value="mraY"/>
    <property type="match status" value="1"/>
</dbReference>
<dbReference type="PANTHER" id="PTHR22926">
    <property type="entry name" value="PHOSPHO-N-ACETYLMURAMOYL-PENTAPEPTIDE-TRANSFERASE"/>
    <property type="match status" value="1"/>
</dbReference>
<dbReference type="PANTHER" id="PTHR22926:SF5">
    <property type="entry name" value="PHOSPHO-N-ACETYLMURAMOYL-PENTAPEPTIDE-TRANSFERASE HOMOLOG"/>
    <property type="match status" value="1"/>
</dbReference>
<dbReference type="Pfam" id="PF00953">
    <property type="entry name" value="Glycos_transf_4"/>
    <property type="match status" value="1"/>
</dbReference>
<dbReference type="PROSITE" id="PS01347">
    <property type="entry name" value="MRAY_1"/>
    <property type="match status" value="1"/>
</dbReference>
<dbReference type="PROSITE" id="PS01348">
    <property type="entry name" value="MRAY_2"/>
    <property type="match status" value="1"/>
</dbReference>
<organism>
    <name type="scientific">Bacteroides fragilis (strain YCH46)</name>
    <dbReference type="NCBI Taxonomy" id="295405"/>
    <lineage>
        <taxon>Bacteria</taxon>
        <taxon>Pseudomonadati</taxon>
        <taxon>Bacteroidota</taxon>
        <taxon>Bacteroidia</taxon>
        <taxon>Bacteroidales</taxon>
        <taxon>Bacteroidaceae</taxon>
        <taxon>Bacteroides</taxon>
    </lineage>
</organism>
<name>MRAY_BACFR</name>
<keyword id="KW-0131">Cell cycle</keyword>
<keyword id="KW-0132">Cell division</keyword>
<keyword id="KW-0997">Cell inner membrane</keyword>
<keyword id="KW-1003">Cell membrane</keyword>
<keyword id="KW-0133">Cell shape</keyword>
<keyword id="KW-0961">Cell wall biogenesis/degradation</keyword>
<keyword id="KW-0460">Magnesium</keyword>
<keyword id="KW-0472">Membrane</keyword>
<keyword id="KW-0479">Metal-binding</keyword>
<keyword id="KW-0573">Peptidoglycan synthesis</keyword>
<keyword id="KW-0808">Transferase</keyword>
<keyword id="KW-0812">Transmembrane</keyword>
<keyword id="KW-1133">Transmembrane helix</keyword>
<evidence type="ECO:0000255" key="1">
    <source>
        <dbReference type="HAMAP-Rule" id="MF_00038"/>
    </source>
</evidence>
<sequence length="422" mass="46884">MLYYLFEWLHKLNFPGAGMFGYTSFRALMAIILALLISSIWGDKFINLLKRKQITETQRDAKIDPFGVNKVGVPSMGGVIIIVAILIPCLLLGKLHNIYMILMLITTVWLGSLGFADDYIKIFKKDKEGLHGKFKIIGQVGLGLIVGLTLYLSPDVVIRENIEVQKSENEIEVIHGTHDLKSTQTTIPFFKSNNLDYADLVGFMGEHAQTAGWILFVIITIFVVTAVSNGANLNDGMDGMAAGNSAIIGLTLGILAYVSSHIEFAGYLNIMYIPGSEELVIFICAFIGALIGFLWYNAYPAQVFMGDTGSLTIGGIIAVFAIIIHKELLIPILCGIFLVENLSVLLQRFYYKAGKRKGIKQRLFKRAPIHDHFRTSMSLVEPGCSVKFTKPDQLFHESKITVRFWIVTIVLAAITIITLKIR</sequence>
<accession>Q64ZL8</accession>
<reference key="1">
    <citation type="journal article" date="2004" name="Proc. Natl. Acad. Sci. U.S.A.">
        <title>Genomic analysis of Bacteroides fragilis reveals extensive DNA inversions regulating cell surface adaptation.</title>
        <authorList>
            <person name="Kuwahara T."/>
            <person name="Yamashita A."/>
            <person name="Hirakawa H."/>
            <person name="Nakayama H."/>
            <person name="Toh H."/>
            <person name="Okada N."/>
            <person name="Kuhara S."/>
            <person name="Hattori M."/>
            <person name="Hayashi T."/>
            <person name="Ohnishi Y."/>
        </authorList>
    </citation>
    <scope>NUCLEOTIDE SEQUENCE [LARGE SCALE GENOMIC DNA]</scope>
    <source>
        <strain>YCH46</strain>
    </source>
</reference>
<feature type="chain" id="PRO_0000108778" description="Phospho-N-acetylmuramoyl-pentapeptide-transferase">
    <location>
        <begin position="1"/>
        <end position="422"/>
    </location>
</feature>
<feature type="transmembrane region" description="Helical" evidence="1">
    <location>
        <begin position="28"/>
        <end position="48"/>
    </location>
</feature>
<feature type="transmembrane region" description="Helical" evidence="1">
    <location>
        <begin position="71"/>
        <end position="91"/>
    </location>
</feature>
<feature type="transmembrane region" description="Helical" evidence="1">
    <location>
        <begin position="95"/>
        <end position="115"/>
    </location>
</feature>
<feature type="transmembrane region" description="Helical" evidence="1">
    <location>
        <begin position="136"/>
        <end position="156"/>
    </location>
</feature>
<feature type="transmembrane region" description="Helical" evidence="1">
    <location>
        <begin position="211"/>
        <end position="231"/>
    </location>
</feature>
<feature type="transmembrane region" description="Helical" evidence="1">
    <location>
        <begin position="246"/>
        <end position="266"/>
    </location>
</feature>
<feature type="transmembrane region" description="Helical" evidence="1">
    <location>
        <begin position="279"/>
        <end position="299"/>
    </location>
</feature>
<feature type="transmembrane region" description="Helical" evidence="1">
    <location>
        <begin position="313"/>
        <end position="333"/>
    </location>
</feature>
<feature type="transmembrane region" description="Helical" evidence="1">
    <location>
        <begin position="399"/>
        <end position="419"/>
    </location>
</feature>
<protein>
    <recommendedName>
        <fullName evidence="1">Phospho-N-acetylmuramoyl-pentapeptide-transferase</fullName>
        <ecNumber evidence="1">2.7.8.13</ecNumber>
    </recommendedName>
    <alternativeName>
        <fullName evidence="1">UDP-MurNAc-pentapeptide phosphotransferase</fullName>
    </alternativeName>
</protein>